<comment type="function">
    <text evidence="2">In presence of calcium ions, it binds to surfactant phospholipids and contributes to lower the surface tension at the air-liquid interface in the alveoli of the mammalian lung and is essential for normal respiration. Enhances the expression of MYO18A/SP-R210 on alveolar macrophages.</text>
</comment>
<comment type="subunit">
    <text evidence="3">Oligomeric complex of 6 set of homotrimers.</text>
</comment>
<comment type="subcellular location">
    <subcellularLocation>
        <location evidence="3">Secreted</location>
    </subcellularLocation>
    <subcellularLocation>
        <location evidence="3">Secreted</location>
        <location evidence="3">Extracellular space</location>
        <location evidence="3">Extracellular matrix</location>
    </subcellularLocation>
    <subcellularLocation>
        <location evidence="3">Secreted</location>
        <location evidence="3">Extracellular space</location>
        <location evidence="3">Surface film</location>
    </subcellularLocation>
</comment>
<comment type="miscellaneous">
    <text>Pulmonary surfactant consists of 90% lipid and 10% protein. There are 4 surfactant-associated proteins: 2 collagenous, carbohydrate-binding glycoproteins (SP-A and SP-D) and 2 small hydrophobic proteins (SP-B and SP-C).</text>
</comment>
<comment type="similarity">
    <text evidence="7">Belongs to the SFTPA family.</text>
</comment>
<feature type="signal peptide" evidence="4">
    <location>
        <begin position="1"/>
        <end position="20"/>
    </location>
</feature>
<feature type="chain" id="PRO_0000017460" description="Pulmonary surfactant-associated protein A">
    <location>
        <begin position="21"/>
        <end position="249"/>
    </location>
</feature>
<feature type="domain" description="Collagen-like">
    <location>
        <begin position="28"/>
        <end position="100"/>
    </location>
</feature>
<feature type="domain" description="C-type lectin" evidence="5">
    <location>
        <begin position="133"/>
        <end position="249"/>
    </location>
</feature>
<feature type="region of interest" description="Disordered" evidence="6">
    <location>
        <begin position="29"/>
        <end position="102"/>
    </location>
</feature>
<feature type="compositionally biased region" description="Basic and acidic residues" evidence="6">
    <location>
        <begin position="42"/>
        <end position="51"/>
    </location>
</feature>
<feature type="compositionally biased region" description="Basic and acidic residues" evidence="6">
    <location>
        <begin position="84"/>
        <end position="93"/>
    </location>
</feature>
<feature type="binding site" evidence="1">
    <location>
        <position position="216"/>
    </location>
    <ligand>
        <name>Ca(2+)</name>
        <dbReference type="ChEBI" id="CHEBI:29108"/>
    </ligand>
</feature>
<feature type="binding site" evidence="1">
    <location>
        <position position="218"/>
    </location>
    <ligand>
        <name>Ca(2+)</name>
        <dbReference type="ChEBI" id="CHEBI:29108"/>
    </ligand>
</feature>
<feature type="binding site" evidence="1">
    <location>
        <position position="235"/>
    </location>
    <ligand>
        <name>Ca(2+)</name>
        <dbReference type="ChEBI" id="CHEBI:29108"/>
    </ligand>
</feature>
<feature type="binding site" evidence="1">
    <location>
        <position position="236"/>
    </location>
    <ligand>
        <name>Ca(2+)</name>
        <dbReference type="ChEBI" id="CHEBI:29108"/>
    </ligand>
</feature>
<feature type="modified residue" description="4-hydroxyproline" evidence="1">
    <location>
        <position position="30"/>
    </location>
</feature>
<feature type="modified residue" description="4-hydroxyproline" evidence="1">
    <location>
        <position position="33"/>
    </location>
</feature>
<feature type="modified residue" description="4-hydroxyproline" evidence="1">
    <location>
        <position position="36"/>
    </location>
</feature>
<feature type="modified residue" description="4-hydroxyproline" evidence="1">
    <location>
        <position position="42"/>
    </location>
</feature>
<feature type="modified residue" description="4-hydroxyproline" evidence="1">
    <location>
        <position position="54"/>
    </location>
</feature>
<feature type="modified residue" description="4-hydroxyproline" evidence="1">
    <location>
        <position position="57"/>
    </location>
</feature>
<feature type="modified residue" description="4-hydroxyproline" evidence="1">
    <location>
        <position position="63"/>
    </location>
</feature>
<feature type="modified residue" description="4-hydroxyproline" evidence="1">
    <location>
        <position position="70"/>
    </location>
</feature>
<feature type="glycosylation site" description="N-linked (GlcNAc...) asparagine" evidence="1">
    <location>
        <position position="208"/>
    </location>
</feature>
<feature type="disulfide bond" description="Interchain" evidence="5">
    <location>
        <position position="26"/>
    </location>
</feature>
<feature type="disulfide bond" evidence="5">
    <location>
        <begin position="155"/>
        <end position="247"/>
    </location>
</feature>
<feature type="disulfide bond" evidence="5">
    <location>
        <begin position="225"/>
        <end position="239"/>
    </location>
</feature>
<organism>
    <name type="scientific">Sus scrofa</name>
    <name type="common">Pig</name>
    <dbReference type="NCBI Taxonomy" id="9823"/>
    <lineage>
        <taxon>Eukaryota</taxon>
        <taxon>Metazoa</taxon>
        <taxon>Chordata</taxon>
        <taxon>Craniata</taxon>
        <taxon>Vertebrata</taxon>
        <taxon>Euteleostomi</taxon>
        <taxon>Mammalia</taxon>
        <taxon>Eutheria</taxon>
        <taxon>Laurasiatheria</taxon>
        <taxon>Artiodactyla</taxon>
        <taxon>Suina</taxon>
        <taxon>Suidae</taxon>
        <taxon>Sus</taxon>
    </lineage>
</organism>
<name>SFTPA_PIG</name>
<gene>
    <name type="primary">SFTPA1</name>
    <name type="synonym">SFTP1</name>
    <name type="synonym">SFTPA</name>
</gene>
<reference key="1">
    <citation type="submission" date="1995-04" db="EMBL/GenBank/DDBJ databases">
        <title>A cDNA clone for the porcine pulmonary surfactant - associated protein (PSP-A).</title>
        <authorList>
            <person name="Adamou J.E."/>
            <person name="Elshourbagy N.A."/>
        </authorList>
    </citation>
    <scope>NUCLEOTIDE SEQUENCE [MRNA]</scope>
    <source>
        <tissue>Lung</tissue>
    </source>
</reference>
<proteinExistence type="evidence at transcript level"/>
<dbReference type="EMBL" id="L41350">
    <property type="protein sequence ID" value="AAA88403.1"/>
    <property type="molecule type" value="mRNA"/>
</dbReference>
<dbReference type="RefSeq" id="NP_999430.1">
    <property type="nucleotide sequence ID" value="NM_214265.1"/>
</dbReference>
<dbReference type="SMR" id="P49874"/>
<dbReference type="FunCoup" id="P49874">
    <property type="interactions" value="147"/>
</dbReference>
<dbReference type="STRING" id="9823.ENSSSCP00000067056"/>
<dbReference type="GlyCosmos" id="P49874">
    <property type="glycosylation" value="1 site, No reported glycans"/>
</dbReference>
<dbReference type="GlyGen" id="P49874">
    <property type="glycosylation" value="3 sites"/>
</dbReference>
<dbReference type="PaxDb" id="9823-ENSSSCP00000011022"/>
<dbReference type="PeptideAtlas" id="P49874"/>
<dbReference type="GeneID" id="397503"/>
<dbReference type="CTD" id="653509"/>
<dbReference type="eggNOG" id="KOG4297">
    <property type="taxonomic scope" value="Eukaryota"/>
</dbReference>
<dbReference type="InParanoid" id="P49874"/>
<dbReference type="OrthoDB" id="7357196at2759"/>
<dbReference type="Proteomes" id="UP000008227">
    <property type="component" value="Unplaced"/>
</dbReference>
<dbReference type="Proteomes" id="UP000314985">
    <property type="component" value="Unplaced"/>
</dbReference>
<dbReference type="Proteomes" id="UP000694570">
    <property type="component" value="Unplaced"/>
</dbReference>
<dbReference type="Proteomes" id="UP000694571">
    <property type="component" value="Unplaced"/>
</dbReference>
<dbReference type="Proteomes" id="UP000694720">
    <property type="component" value="Unplaced"/>
</dbReference>
<dbReference type="Proteomes" id="UP000694722">
    <property type="component" value="Unplaced"/>
</dbReference>
<dbReference type="Proteomes" id="UP000694723">
    <property type="component" value="Unplaced"/>
</dbReference>
<dbReference type="Proteomes" id="UP000694724">
    <property type="component" value="Unplaced"/>
</dbReference>
<dbReference type="Proteomes" id="UP000694725">
    <property type="component" value="Unplaced"/>
</dbReference>
<dbReference type="Proteomes" id="UP000694726">
    <property type="component" value="Unplaced"/>
</dbReference>
<dbReference type="Proteomes" id="UP000694727">
    <property type="component" value="Unplaced"/>
</dbReference>
<dbReference type="Proteomes" id="UP000694728">
    <property type="component" value="Unplaced"/>
</dbReference>
<dbReference type="GO" id="GO:0005581">
    <property type="term" value="C:collagen trimer"/>
    <property type="evidence" value="ECO:0007669"/>
    <property type="project" value="UniProtKB-KW"/>
</dbReference>
<dbReference type="GO" id="GO:0005615">
    <property type="term" value="C:extracellular space"/>
    <property type="evidence" value="ECO:0000318"/>
    <property type="project" value="GO_Central"/>
</dbReference>
<dbReference type="GO" id="GO:0005771">
    <property type="term" value="C:multivesicular body"/>
    <property type="evidence" value="ECO:0000318"/>
    <property type="project" value="GO_Central"/>
</dbReference>
<dbReference type="GO" id="GO:0030246">
    <property type="term" value="F:carbohydrate binding"/>
    <property type="evidence" value="ECO:0007669"/>
    <property type="project" value="UniProtKB-KW"/>
</dbReference>
<dbReference type="GO" id="GO:0046872">
    <property type="term" value="F:metal ion binding"/>
    <property type="evidence" value="ECO:0007669"/>
    <property type="project" value="UniProtKB-KW"/>
</dbReference>
<dbReference type="GO" id="GO:0007585">
    <property type="term" value="P:respiratory gaseous exchange by respiratory system"/>
    <property type="evidence" value="ECO:0007669"/>
    <property type="project" value="UniProtKB-KW"/>
</dbReference>
<dbReference type="FunFam" id="3.10.100.10:FF:000056">
    <property type="entry name" value="Pulmonary surfactant-associated protein A"/>
    <property type="match status" value="1"/>
</dbReference>
<dbReference type="Gene3D" id="3.10.100.10">
    <property type="entry name" value="Mannose-Binding Protein A, subunit A"/>
    <property type="match status" value="1"/>
</dbReference>
<dbReference type="InterPro" id="IPR001304">
    <property type="entry name" value="C-type_lectin-like"/>
</dbReference>
<dbReference type="InterPro" id="IPR016186">
    <property type="entry name" value="C-type_lectin-like/link_sf"/>
</dbReference>
<dbReference type="InterPro" id="IPR018378">
    <property type="entry name" value="C-type_lectin_CS"/>
</dbReference>
<dbReference type="InterPro" id="IPR051077">
    <property type="entry name" value="Ca-dependent_lectin"/>
</dbReference>
<dbReference type="InterPro" id="IPR016187">
    <property type="entry name" value="CTDL_fold"/>
</dbReference>
<dbReference type="PANTHER" id="PTHR24024">
    <property type="entry name" value="PULMONARY SURFACTANT-ASSOCIATED PROTEIN A"/>
    <property type="match status" value="1"/>
</dbReference>
<dbReference type="PANTHER" id="PTHR24024:SF13">
    <property type="entry name" value="PULMONARY SURFACTANT-ASSOCIATED PROTEIN A1"/>
    <property type="match status" value="1"/>
</dbReference>
<dbReference type="Pfam" id="PF00059">
    <property type="entry name" value="Lectin_C"/>
    <property type="match status" value="1"/>
</dbReference>
<dbReference type="SMART" id="SM00034">
    <property type="entry name" value="CLECT"/>
    <property type="match status" value="1"/>
</dbReference>
<dbReference type="SUPFAM" id="SSF56436">
    <property type="entry name" value="C-type lectin-like"/>
    <property type="match status" value="1"/>
</dbReference>
<dbReference type="SUPFAM" id="SSF57944">
    <property type="entry name" value="Triple coiled coil domain of C-type lectins"/>
    <property type="match status" value="1"/>
</dbReference>
<dbReference type="PROSITE" id="PS00615">
    <property type="entry name" value="C_TYPE_LECTIN_1"/>
    <property type="match status" value="1"/>
</dbReference>
<dbReference type="PROSITE" id="PS50041">
    <property type="entry name" value="C_TYPE_LECTIN_2"/>
    <property type="match status" value="1"/>
</dbReference>
<sequence>MLRWPLALTFLLLAVSGLECDVKEVCLASPGIPGTPGSHGLPGRDGRDGIKGDPGPPGPMGPPGGMAGPPGQDGMIGAPGLPGERGEKGEPGERGPPGLPAHLDEELQSALHEIRHQILQSMGVLSFQEFMLAVGEKVFSTNGQSVAFWMSLESCVPEQVGRIAAPRSPEENEAIASIVKKHNTYAYLGLVEGPTAGDFFYLDGTPVNYTNWYPGEPRGRGKEKCVEMYTDGQWNDRNCQQYRLAICEF</sequence>
<protein>
    <recommendedName>
        <fullName>Pulmonary surfactant-associated protein A</fullName>
        <shortName>PSAP</shortName>
        <shortName>PSP-A</shortName>
        <shortName>SP-A</shortName>
    </recommendedName>
</protein>
<accession>P49874</accession>
<keyword id="KW-0106">Calcium</keyword>
<keyword id="KW-0176">Collagen</keyword>
<keyword id="KW-1015">Disulfide bond</keyword>
<keyword id="KW-0272">Extracellular matrix</keyword>
<keyword id="KW-0305">Gaseous exchange</keyword>
<keyword id="KW-0325">Glycoprotein</keyword>
<keyword id="KW-0379">Hydroxylation</keyword>
<keyword id="KW-0430">Lectin</keyword>
<keyword id="KW-0479">Metal-binding</keyword>
<keyword id="KW-1185">Reference proteome</keyword>
<keyword id="KW-0677">Repeat</keyword>
<keyword id="KW-0964">Secreted</keyword>
<keyword id="KW-0732">Signal</keyword>
<keyword id="KW-0767">Surface film</keyword>
<evidence type="ECO:0000250" key="1"/>
<evidence type="ECO:0000250" key="2">
    <source>
        <dbReference type="UniProtKB" id="P35242"/>
    </source>
</evidence>
<evidence type="ECO:0000250" key="3">
    <source>
        <dbReference type="UniProtKB" id="Q8IWL2"/>
    </source>
</evidence>
<evidence type="ECO:0000255" key="4"/>
<evidence type="ECO:0000255" key="5">
    <source>
        <dbReference type="PROSITE-ProRule" id="PRU00040"/>
    </source>
</evidence>
<evidence type="ECO:0000256" key="6">
    <source>
        <dbReference type="SAM" id="MobiDB-lite"/>
    </source>
</evidence>
<evidence type="ECO:0000305" key="7"/>